<dbReference type="EC" id="3.6.-.-" evidence="1"/>
<dbReference type="EMBL" id="CR628336">
    <property type="protein sequence ID" value="CAH14226.1"/>
    <property type="molecule type" value="Genomic_DNA"/>
</dbReference>
<dbReference type="RefSeq" id="WP_015443855.1">
    <property type="nucleotide sequence ID" value="NC_006368.1"/>
</dbReference>
<dbReference type="SMR" id="Q5X0M3"/>
<dbReference type="KEGG" id="lpp:lpp3073"/>
<dbReference type="LegioList" id="lpp3073"/>
<dbReference type="HOGENOM" id="CLU_019624_4_1_6"/>
<dbReference type="GO" id="GO:0005829">
    <property type="term" value="C:cytosol"/>
    <property type="evidence" value="ECO:0007669"/>
    <property type="project" value="TreeGrafter"/>
</dbReference>
<dbReference type="GO" id="GO:0005525">
    <property type="term" value="F:GTP binding"/>
    <property type="evidence" value="ECO:0007669"/>
    <property type="project" value="UniProtKB-UniRule"/>
</dbReference>
<dbReference type="GO" id="GO:0003924">
    <property type="term" value="F:GTPase activity"/>
    <property type="evidence" value="ECO:0007669"/>
    <property type="project" value="UniProtKB-UniRule"/>
</dbReference>
<dbReference type="GO" id="GO:0046872">
    <property type="term" value="F:metal ion binding"/>
    <property type="evidence" value="ECO:0007669"/>
    <property type="project" value="UniProtKB-KW"/>
</dbReference>
<dbReference type="GO" id="GO:0030488">
    <property type="term" value="P:tRNA methylation"/>
    <property type="evidence" value="ECO:0007669"/>
    <property type="project" value="TreeGrafter"/>
</dbReference>
<dbReference type="GO" id="GO:0002098">
    <property type="term" value="P:tRNA wobble uridine modification"/>
    <property type="evidence" value="ECO:0007669"/>
    <property type="project" value="TreeGrafter"/>
</dbReference>
<dbReference type="CDD" id="cd04164">
    <property type="entry name" value="trmE"/>
    <property type="match status" value="1"/>
</dbReference>
<dbReference type="CDD" id="cd14858">
    <property type="entry name" value="TrmE_N"/>
    <property type="match status" value="1"/>
</dbReference>
<dbReference type="Gene3D" id="3.40.50.300">
    <property type="entry name" value="P-loop containing nucleotide triphosphate hydrolases"/>
    <property type="match status" value="1"/>
</dbReference>
<dbReference type="Gene3D" id="3.30.1360.120">
    <property type="entry name" value="Probable tRNA modification gtpase trme, domain 1"/>
    <property type="match status" value="1"/>
</dbReference>
<dbReference type="Gene3D" id="1.20.120.430">
    <property type="entry name" value="tRNA modification GTPase MnmE domain 2"/>
    <property type="match status" value="1"/>
</dbReference>
<dbReference type="HAMAP" id="MF_00379">
    <property type="entry name" value="GTPase_MnmE"/>
    <property type="match status" value="1"/>
</dbReference>
<dbReference type="InterPro" id="IPR031168">
    <property type="entry name" value="G_TrmE"/>
</dbReference>
<dbReference type="InterPro" id="IPR006073">
    <property type="entry name" value="GTP-bd"/>
</dbReference>
<dbReference type="InterPro" id="IPR018948">
    <property type="entry name" value="GTP-bd_TrmE_N"/>
</dbReference>
<dbReference type="InterPro" id="IPR004520">
    <property type="entry name" value="GTPase_MnmE"/>
</dbReference>
<dbReference type="InterPro" id="IPR027368">
    <property type="entry name" value="MnmE_dom2"/>
</dbReference>
<dbReference type="InterPro" id="IPR025867">
    <property type="entry name" value="MnmE_helical"/>
</dbReference>
<dbReference type="InterPro" id="IPR027417">
    <property type="entry name" value="P-loop_NTPase"/>
</dbReference>
<dbReference type="InterPro" id="IPR005225">
    <property type="entry name" value="Small_GTP-bd"/>
</dbReference>
<dbReference type="InterPro" id="IPR027266">
    <property type="entry name" value="TrmE/GcvT_dom1"/>
</dbReference>
<dbReference type="NCBIfam" id="TIGR00450">
    <property type="entry name" value="mnmE_trmE_thdF"/>
    <property type="match status" value="1"/>
</dbReference>
<dbReference type="NCBIfam" id="NF003661">
    <property type="entry name" value="PRK05291.1-3"/>
    <property type="match status" value="1"/>
</dbReference>
<dbReference type="NCBIfam" id="TIGR00231">
    <property type="entry name" value="small_GTP"/>
    <property type="match status" value="1"/>
</dbReference>
<dbReference type="PANTHER" id="PTHR42714">
    <property type="entry name" value="TRNA MODIFICATION GTPASE GTPBP3"/>
    <property type="match status" value="1"/>
</dbReference>
<dbReference type="PANTHER" id="PTHR42714:SF2">
    <property type="entry name" value="TRNA MODIFICATION GTPASE GTPBP3, MITOCHONDRIAL"/>
    <property type="match status" value="1"/>
</dbReference>
<dbReference type="Pfam" id="PF01926">
    <property type="entry name" value="MMR_HSR1"/>
    <property type="match status" value="1"/>
</dbReference>
<dbReference type="Pfam" id="PF12631">
    <property type="entry name" value="MnmE_helical"/>
    <property type="match status" value="1"/>
</dbReference>
<dbReference type="Pfam" id="PF10396">
    <property type="entry name" value="TrmE_N"/>
    <property type="match status" value="1"/>
</dbReference>
<dbReference type="SUPFAM" id="SSF52540">
    <property type="entry name" value="P-loop containing nucleoside triphosphate hydrolases"/>
    <property type="match status" value="1"/>
</dbReference>
<dbReference type="PROSITE" id="PS51709">
    <property type="entry name" value="G_TRME"/>
    <property type="match status" value="1"/>
</dbReference>
<name>MNME_LEGPA</name>
<reference key="1">
    <citation type="journal article" date="2004" name="Nat. Genet.">
        <title>Evidence in the Legionella pneumophila genome for exploitation of host cell functions and high genome plasticity.</title>
        <authorList>
            <person name="Cazalet C."/>
            <person name="Rusniok C."/>
            <person name="Brueggemann H."/>
            <person name="Zidane N."/>
            <person name="Magnier A."/>
            <person name="Ma L."/>
            <person name="Tichit M."/>
            <person name="Jarraud S."/>
            <person name="Bouchier C."/>
            <person name="Vandenesch F."/>
            <person name="Kunst F."/>
            <person name="Etienne J."/>
            <person name="Glaser P."/>
            <person name="Buchrieser C."/>
        </authorList>
    </citation>
    <scope>NUCLEOTIDE SEQUENCE [LARGE SCALE GENOMIC DNA]</scope>
    <source>
        <strain>Paris</strain>
    </source>
</reference>
<feature type="chain" id="PRO_0000345818" description="tRNA modification GTPase MnmE">
    <location>
        <begin position="1"/>
        <end position="446"/>
    </location>
</feature>
<feature type="domain" description="TrmE-type G">
    <location>
        <begin position="215"/>
        <end position="370"/>
    </location>
</feature>
<feature type="binding site" evidence="1">
    <location>
        <position position="22"/>
    </location>
    <ligand>
        <name>(6S)-5-formyl-5,6,7,8-tetrahydrofolate</name>
        <dbReference type="ChEBI" id="CHEBI:57457"/>
    </ligand>
</feature>
<feature type="binding site" evidence="1">
    <location>
        <position position="80"/>
    </location>
    <ligand>
        <name>(6S)-5-formyl-5,6,7,8-tetrahydrofolate</name>
        <dbReference type="ChEBI" id="CHEBI:57457"/>
    </ligand>
</feature>
<feature type="binding site" evidence="1">
    <location>
        <position position="119"/>
    </location>
    <ligand>
        <name>(6S)-5-formyl-5,6,7,8-tetrahydrofolate</name>
        <dbReference type="ChEBI" id="CHEBI:57457"/>
    </ligand>
</feature>
<feature type="binding site" evidence="1">
    <location>
        <begin position="225"/>
        <end position="230"/>
    </location>
    <ligand>
        <name>GTP</name>
        <dbReference type="ChEBI" id="CHEBI:37565"/>
    </ligand>
</feature>
<feature type="binding site" evidence="1">
    <location>
        <position position="225"/>
    </location>
    <ligand>
        <name>K(+)</name>
        <dbReference type="ChEBI" id="CHEBI:29103"/>
    </ligand>
</feature>
<feature type="binding site" evidence="1">
    <location>
        <position position="229"/>
    </location>
    <ligand>
        <name>Mg(2+)</name>
        <dbReference type="ChEBI" id="CHEBI:18420"/>
    </ligand>
</feature>
<feature type="binding site" evidence="1">
    <location>
        <begin position="244"/>
        <end position="250"/>
    </location>
    <ligand>
        <name>GTP</name>
        <dbReference type="ChEBI" id="CHEBI:37565"/>
    </ligand>
</feature>
<feature type="binding site" evidence="1">
    <location>
        <position position="244"/>
    </location>
    <ligand>
        <name>K(+)</name>
        <dbReference type="ChEBI" id="CHEBI:29103"/>
    </ligand>
</feature>
<feature type="binding site" evidence="1">
    <location>
        <position position="246"/>
    </location>
    <ligand>
        <name>K(+)</name>
        <dbReference type="ChEBI" id="CHEBI:29103"/>
    </ligand>
</feature>
<feature type="binding site" evidence="1">
    <location>
        <position position="249"/>
    </location>
    <ligand>
        <name>K(+)</name>
        <dbReference type="ChEBI" id="CHEBI:29103"/>
    </ligand>
</feature>
<feature type="binding site" evidence="1">
    <location>
        <position position="250"/>
    </location>
    <ligand>
        <name>Mg(2+)</name>
        <dbReference type="ChEBI" id="CHEBI:18420"/>
    </ligand>
</feature>
<feature type="binding site" evidence="1">
    <location>
        <begin position="269"/>
        <end position="272"/>
    </location>
    <ligand>
        <name>GTP</name>
        <dbReference type="ChEBI" id="CHEBI:37565"/>
    </ligand>
</feature>
<feature type="binding site" evidence="1">
    <location>
        <position position="446"/>
    </location>
    <ligand>
        <name>(6S)-5-formyl-5,6,7,8-tetrahydrofolate</name>
        <dbReference type="ChEBI" id="CHEBI:57457"/>
    </ligand>
</feature>
<evidence type="ECO:0000255" key="1">
    <source>
        <dbReference type="HAMAP-Rule" id="MF_00379"/>
    </source>
</evidence>
<organism>
    <name type="scientific">Legionella pneumophila (strain Paris)</name>
    <dbReference type="NCBI Taxonomy" id="297246"/>
    <lineage>
        <taxon>Bacteria</taxon>
        <taxon>Pseudomonadati</taxon>
        <taxon>Pseudomonadota</taxon>
        <taxon>Gammaproteobacteria</taxon>
        <taxon>Legionellales</taxon>
        <taxon>Legionellaceae</taxon>
        <taxon>Legionella</taxon>
    </lineage>
</organism>
<proteinExistence type="inferred from homology"/>
<gene>
    <name evidence="1" type="primary">mnmE</name>
    <name evidence="1" type="synonym">trmE</name>
    <name type="ordered locus">lpp3073</name>
</gene>
<sequence length="446" mass="49006">MSIDTIVAIATPPGRGGVGIVRISGPKAYAIALCLNGNKALQPRLATFCSLYKGNNEVLDQGLVLYFKGPHSFTGEDIIEIQAHGSPVVLDLLIKESIAAGARLARPGEFSERAFLNDKIDLIQAEAIADLIQASSDTAARMALKSLQGDFSKKINQLNEELIYLRMYVEAAIDFPEEEIDFLNDGNVSQLLQRIIGRLEEIRSQANQGVLLREGLSLVIAGRPNAGKSTLINNLAGRDVAIVTEIAGTTRDIMREHILLDDIPLHIIDTAGLRDSDDLVEKEGIKRAWQELKRADCVLLVVDINNRDQQNSLLNELRLTLPNKIPIITVYNKIDTTKLTAKCDEHTVYLSAKTGEGLDELKKVIKQVVGYQPTEGQFLARRRHLQALDEAKALLLTGQSQLTNHKAGELLAEDLRLAHQTLCEITGEFTSDDLLGKIFSSFCIGK</sequence>
<protein>
    <recommendedName>
        <fullName evidence="1">tRNA modification GTPase MnmE</fullName>
        <ecNumber evidence="1">3.6.-.-</ecNumber>
    </recommendedName>
</protein>
<comment type="function">
    <text evidence="1">Exhibits a very high intrinsic GTPase hydrolysis rate. Involved in the addition of a carboxymethylaminomethyl (cmnm) group at the wobble position (U34) of certain tRNAs, forming tRNA-cmnm(5)s(2)U34.</text>
</comment>
<comment type="cofactor">
    <cofactor evidence="1">
        <name>K(+)</name>
        <dbReference type="ChEBI" id="CHEBI:29103"/>
    </cofactor>
    <text evidence="1">Binds 1 potassium ion per subunit.</text>
</comment>
<comment type="subunit">
    <text evidence="1">Homodimer. Heterotetramer of two MnmE and two MnmG subunits.</text>
</comment>
<comment type="subcellular location">
    <subcellularLocation>
        <location evidence="1">Cytoplasm</location>
    </subcellularLocation>
</comment>
<comment type="similarity">
    <text evidence="1">Belongs to the TRAFAC class TrmE-Era-EngA-EngB-Septin-like GTPase superfamily. TrmE GTPase family.</text>
</comment>
<keyword id="KW-0963">Cytoplasm</keyword>
<keyword id="KW-0342">GTP-binding</keyword>
<keyword id="KW-0378">Hydrolase</keyword>
<keyword id="KW-0460">Magnesium</keyword>
<keyword id="KW-0479">Metal-binding</keyword>
<keyword id="KW-0547">Nucleotide-binding</keyword>
<keyword id="KW-0630">Potassium</keyword>
<keyword id="KW-0819">tRNA processing</keyword>
<accession>Q5X0M3</accession>